<gene>
    <name type="primary">sgcX</name>
    <name type="ordered locus">STM1612</name>
</gene>
<accession>P58535</accession>
<feature type="chain" id="PRO_0000071658" description="Putative aminopeptidase SgcX">
    <location>
        <begin position="1"/>
        <end position="372"/>
    </location>
</feature>
<feature type="active site" description="Proton acceptor" evidence="1">
    <location>
        <position position="212"/>
    </location>
</feature>
<feature type="binding site" evidence="1">
    <location>
        <position position="67"/>
    </location>
    <ligand>
        <name>a divalent metal cation</name>
        <dbReference type="ChEBI" id="CHEBI:60240"/>
        <label>1</label>
    </ligand>
</feature>
<feature type="binding site" evidence="1">
    <location>
        <position position="180"/>
    </location>
    <ligand>
        <name>a divalent metal cation</name>
        <dbReference type="ChEBI" id="CHEBI:60240"/>
        <label>1</label>
    </ligand>
</feature>
<feature type="binding site" evidence="1">
    <location>
        <position position="180"/>
    </location>
    <ligand>
        <name>a divalent metal cation</name>
        <dbReference type="ChEBI" id="CHEBI:60240"/>
        <label>2</label>
    </ligand>
</feature>
<feature type="binding site" evidence="1">
    <location>
        <position position="213"/>
    </location>
    <ligand>
        <name>a divalent metal cation</name>
        <dbReference type="ChEBI" id="CHEBI:60240"/>
        <label>2</label>
    </ligand>
</feature>
<feature type="binding site" evidence="1">
    <location>
        <position position="235"/>
    </location>
    <ligand>
        <name>a divalent metal cation</name>
        <dbReference type="ChEBI" id="CHEBI:60240"/>
        <label>1</label>
    </ligand>
</feature>
<feature type="binding site" evidence="1">
    <location>
        <position position="329"/>
    </location>
    <ligand>
        <name>a divalent metal cation</name>
        <dbReference type="ChEBI" id="CHEBI:60240"/>
        <label>2</label>
    </ligand>
</feature>
<protein>
    <recommendedName>
        <fullName>Putative aminopeptidase SgcX</fullName>
        <ecNumber>3.4.11.-</ecNumber>
    </recommendedName>
</protein>
<evidence type="ECO:0000250" key="1"/>
<evidence type="ECO:0000305" key="2"/>
<proteinExistence type="inferred from homology"/>
<organism>
    <name type="scientific">Salmonella typhimurium (strain LT2 / SGSC1412 / ATCC 700720)</name>
    <dbReference type="NCBI Taxonomy" id="99287"/>
    <lineage>
        <taxon>Bacteria</taxon>
        <taxon>Pseudomonadati</taxon>
        <taxon>Pseudomonadota</taxon>
        <taxon>Gammaproteobacteria</taxon>
        <taxon>Enterobacterales</taxon>
        <taxon>Enterobacteriaceae</taxon>
        <taxon>Salmonella</taxon>
    </lineage>
</organism>
<reference key="1">
    <citation type="journal article" date="2001" name="Nature">
        <title>Complete genome sequence of Salmonella enterica serovar Typhimurium LT2.</title>
        <authorList>
            <person name="McClelland M."/>
            <person name="Sanderson K.E."/>
            <person name="Spieth J."/>
            <person name="Clifton S.W."/>
            <person name="Latreille P."/>
            <person name="Courtney L."/>
            <person name="Porwollik S."/>
            <person name="Ali J."/>
            <person name="Dante M."/>
            <person name="Du F."/>
            <person name="Hou S."/>
            <person name="Layman D."/>
            <person name="Leonard S."/>
            <person name="Nguyen C."/>
            <person name="Scott K."/>
            <person name="Holmes A."/>
            <person name="Grewal N."/>
            <person name="Mulvaney E."/>
            <person name="Ryan E."/>
            <person name="Sun H."/>
            <person name="Florea L."/>
            <person name="Miller W."/>
            <person name="Stoneking T."/>
            <person name="Nhan M."/>
            <person name="Waterston R."/>
            <person name="Wilson R.K."/>
        </authorList>
    </citation>
    <scope>NUCLEOTIDE SEQUENCE [LARGE SCALE GENOMIC DNA]</scope>
    <source>
        <strain>LT2 / SGSC1412 / ATCC 700720</strain>
    </source>
</reference>
<keyword id="KW-0031">Aminopeptidase</keyword>
<keyword id="KW-0378">Hydrolase</keyword>
<keyword id="KW-0479">Metal-binding</keyword>
<keyword id="KW-0482">Metalloprotease</keyword>
<keyword id="KW-0645">Protease</keyword>
<keyword id="KW-1185">Reference proteome</keyword>
<sequence>MTFSVQETLFSLLRLNGISGHENSIANVMQHAFEQQAKDVWRDRLGNVVARYGSDKPDALRLMIFAHMDEVGFMVRKIEPSGFLRFERVGGPAQITMPGSIVTLAGRSGDIMGCIGIKAYHFAKGDERTQPPALDKLWIDIGAKDKADAERMGIQVGTPVTLYNPPHCLGNDLVCSKALDDRLGCTALLGVAEALASTPLDIAVFLVASVQEEFNIRGIIPVLRRVRPDLAIGIDITPSCDTPDLQDYSDVRVNHGVGITCLNYHGRGTLAGLITPPRLLRMLETTAHENNIPVQREVAPGVITETGYIQVELDGIPCASLSIPCRYTHSPAEVASLRDLADCIRLLTALANMSPEQFPIEPETGATQEARP</sequence>
<name>SGCX_SALTY</name>
<dbReference type="EC" id="3.4.11.-"/>
<dbReference type="EMBL" id="AE006468">
    <property type="protein sequence ID" value="AAL20530.1"/>
    <property type="molecule type" value="Genomic_DNA"/>
</dbReference>
<dbReference type="RefSeq" id="NP_460571.1">
    <property type="nucleotide sequence ID" value="NC_003197.2"/>
</dbReference>
<dbReference type="RefSeq" id="WP_000144617.1">
    <property type="nucleotide sequence ID" value="NC_003197.2"/>
</dbReference>
<dbReference type="SMR" id="P58535"/>
<dbReference type="STRING" id="99287.STM1612"/>
<dbReference type="MEROPS" id="M42.A01"/>
<dbReference type="PaxDb" id="99287-STM1612"/>
<dbReference type="GeneID" id="1253130"/>
<dbReference type="KEGG" id="stm:STM1612"/>
<dbReference type="PATRIC" id="fig|99287.12.peg.1703"/>
<dbReference type="HOGENOM" id="CLU_047249_0_1_6"/>
<dbReference type="OMA" id="WQDLYID"/>
<dbReference type="PhylomeDB" id="P58535"/>
<dbReference type="BioCyc" id="SENT99287:STM1612-MONOMER"/>
<dbReference type="Proteomes" id="UP000001014">
    <property type="component" value="Chromosome"/>
</dbReference>
<dbReference type="GO" id="GO:0046872">
    <property type="term" value="F:metal ion binding"/>
    <property type="evidence" value="ECO:0007669"/>
    <property type="project" value="UniProtKB-KW"/>
</dbReference>
<dbReference type="GO" id="GO:0070006">
    <property type="term" value="F:metalloaminopeptidase activity"/>
    <property type="evidence" value="ECO:0000318"/>
    <property type="project" value="GO_Central"/>
</dbReference>
<dbReference type="GO" id="GO:0006508">
    <property type="term" value="P:proteolysis"/>
    <property type="evidence" value="ECO:0007669"/>
    <property type="project" value="UniProtKB-KW"/>
</dbReference>
<dbReference type="CDD" id="cd05656">
    <property type="entry name" value="M42_Frv"/>
    <property type="match status" value="1"/>
</dbReference>
<dbReference type="Gene3D" id="2.40.30.40">
    <property type="entry name" value="Peptidase M42, domain 2"/>
    <property type="match status" value="1"/>
</dbReference>
<dbReference type="Gene3D" id="3.40.630.10">
    <property type="entry name" value="Zn peptidases"/>
    <property type="match status" value="1"/>
</dbReference>
<dbReference type="InterPro" id="IPR008007">
    <property type="entry name" value="Peptidase_M42"/>
</dbReference>
<dbReference type="InterPro" id="IPR051464">
    <property type="entry name" value="Peptidase_M42_aminopept"/>
</dbReference>
<dbReference type="InterPro" id="IPR023367">
    <property type="entry name" value="Peptidase_M42_dom2"/>
</dbReference>
<dbReference type="PANTHER" id="PTHR32481">
    <property type="entry name" value="AMINOPEPTIDASE"/>
    <property type="match status" value="1"/>
</dbReference>
<dbReference type="PANTHER" id="PTHR32481:SF12">
    <property type="entry name" value="AMINOPEPTIDASE SGCX-RELATED"/>
    <property type="match status" value="1"/>
</dbReference>
<dbReference type="Pfam" id="PF05343">
    <property type="entry name" value="Peptidase_M42"/>
    <property type="match status" value="1"/>
</dbReference>
<dbReference type="PIRSF" id="PIRSF001123">
    <property type="entry name" value="PepA_GA"/>
    <property type="match status" value="1"/>
</dbReference>
<dbReference type="SUPFAM" id="SSF101821">
    <property type="entry name" value="Aminopeptidase/glucanase lid domain"/>
    <property type="match status" value="1"/>
</dbReference>
<dbReference type="SUPFAM" id="SSF53187">
    <property type="entry name" value="Zn-dependent exopeptidases"/>
    <property type="match status" value="1"/>
</dbReference>
<comment type="cofactor">
    <cofactor evidence="1">
        <name>a divalent metal cation</name>
        <dbReference type="ChEBI" id="CHEBI:60240"/>
    </cofactor>
    <text evidence="1">Binds 2 divalent metal cations per subunit.</text>
</comment>
<comment type="similarity">
    <text evidence="2">Belongs to the peptidase M42 family.</text>
</comment>